<gene>
    <name evidence="1" type="primary">adk</name>
    <name type="ordered locus">SMU_2005</name>
</gene>
<organism>
    <name type="scientific">Streptococcus mutans serotype c (strain ATCC 700610 / UA159)</name>
    <dbReference type="NCBI Taxonomy" id="210007"/>
    <lineage>
        <taxon>Bacteria</taxon>
        <taxon>Bacillati</taxon>
        <taxon>Bacillota</taxon>
        <taxon>Bacilli</taxon>
        <taxon>Lactobacillales</taxon>
        <taxon>Streptococcaceae</taxon>
        <taxon>Streptococcus</taxon>
    </lineage>
</organism>
<accession>Q8DS33</accession>
<sequence length="212" mass="23638">MNLLIMGLPGAGKGTQAAKIVEKFGLAHISTGDMFRAAMANQTEMGTLAKSFIDKGELVPDEVTNGIVKERLSESDITKKGFLLDGYPRTIEQAHALDEILSKLNLKLDGVINIDVDPACLVERLSGRIINRKTGETYHKVFNPPADYNEDDYYQREDDKPETVKRRLDVNIAQGHPIIEYYRNKGLVYDIEGNQDINLVFETIAKVLANLS</sequence>
<dbReference type="EC" id="2.7.4.3" evidence="1"/>
<dbReference type="EMBL" id="AE014133">
    <property type="protein sequence ID" value="AAN59609.1"/>
    <property type="molecule type" value="Genomic_DNA"/>
</dbReference>
<dbReference type="RefSeq" id="NP_722303.1">
    <property type="nucleotide sequence ID" value="NC_004350.2"/>
</dbReference>
<dbReference type="RefSeq" id="WP_002262319.1">
    <property type="nucleotide sequence ID" value="NC_004350.2"/>
</dbReference>
<dbReference type="SMR" id="Q8DS33"/>
<dbReference type="STRING" id="210007.SMU_2005"/>
<dbReference type="KEGG" id="smu:SMU_2005"/>
<dbReference type="PATRIC" id="fig|210007.7.peg.1786"/>
<dbReference type="eggNOG" id="COG0563">
    <property type="taxonomic scope" value="Bacteria"/>
</dbReference>
<dbReference type="HOGENOM" id="CLU_032354_1_2_9"/>
<dbReference type="OrthoDB" id="9805030at2"/>
<dbReference type="PhylomeDB" id="Q8DS33"/>
<dbReference type="UniPathway" id="UPA00588">
    <property type="reaction ID" value="UER00649"/>
</dbReference>
<dbReference type="Proteomes" id="UP000002512">
    <property type="component" value="Chromosome"/>
</dbReference>
<dbReference type="GO" id="GO:0005737">
    <property type="term" value="C:cytoplasm"/>
    <property type="evidence" value="ECO:0007669"/>
    <property type="project" value="UniProtKB-SubCell"/>
</dbReference>
<dbReference type="GO" id="GO:0004017">
    <property type="term" value="F:adenylate kinase activity"/>
    <property type="evidence" value="ECO:0007669"/>
    <property type="project" value="UniProtKB-UniRule"/>
</dbReference>
<dbReference type="GO" id="GO:0005524">
    <property type="term" value="F:ATP binding"/>
    <property type="evidence" value="ECO:0007669"/>
    <property type="project" value="UniProtKB-UniRule"/>
</dbReference>
<dbReference type="GO" id="GO:0044209">
    <property type="term" value="P:AMP salvage"/>
    <property type="evidence" value="ECO:0007669"/>
    <property type="project" value="UniProtKB-UniRule"/>
</dbReference>
<dbReference type="CDD" id="cd01428">
    <property type="entry name" value="ADK"/>
    <property type="match status" value="1"/>
</dbReference>
<dbReference type="FunFam" id="3.40.50.300:FF:000106">
    <property type="entry name" value="Adenylate kinase mitochondrial"/>
    <property type="match status" value="1"/>
</dbReference>
<dbReference type="Gene3D" id="3.40.50.300">
    <property type="entry name" value="P-loop containing nucleotide triphosphate hydrolases"/>
    <property type="match status" value="1"/>
</dbReference>
<dbReference type="HAMAP" id="MF_00235">
    <property type="entry name" value="Adenylate_kinase_Adk"/>
    <property type="match status" value="1"/>
</dbReference>
<dbReference type="InterPro" id="IPR006259">
    <property type="entry name" value="Adenyl_kin_sub"/>
</dbReference>
<dbReference type="InterPro" id="IPR000850">
    <property type="entry name" value="Adenylat/UMP-CMP_kin"/>
</dbReference>
<dbReference type="InterPro" id="IPR033690">
    <property type="entry name" value="Adenylat_kinase_CS"/>
</dbReference>
<dbReference type="InterPro" id="IPR027417">
    <property type="entry name" value="P-loop_NTPase"/>
</dbReference>
<dbReference type="NCBIfam" id="TIGR01351">
    <property type="entry name" value="adk"/>
    <property type="match status" value="1"/>
</dbReference>
<dbReference type="NCBIfam" id="NF001380">
    <property type="entry name" value="PRK00279.1-2"/>
    <property type="match status" value="1"/>
</dbReference>
<dbReference type="NCBIfam" id="NF001381">
    <property type="entry name" value="PRK00279.1-3"/>
    <property type="match status" value="1"/>
</dbReference>
<dbReference type="NCBIfam" id="NF001382">
    <property type="entry name" value="PRK00279.1-4"/>
    <property type="match status" value="1"/>
</dbReference>
<dbReference type="NCBIfam" id="NF011100">
    <property type="entry name" value="PRK14527.1"/>
    <property type="match status" value="1"/>
</dbReference>
<dbReference type="PANTHER" id="PTHR23359">
    <property type="entry name" value="NUCLEOTIDE KINASE"/>
    <property type="match status" value="1"/>
</dbReference>
<dbReference type="Pfam" id="PF00406">
    <property type="entry name" value="ADK"/>
    <property type="match status" value="1"/>
</dbReference>
<dbReference type="PRINTS" id="PR00094">
    <property type="entry name" value="ADENYLTKNASE"/>
</dbReference>
<dbReference type="SUPFAM" id="SSF52540">
    <property type="entry name" value="P-loop containing nucleoside triphosphate hydrolases"/>
    <property type="match status" value="1"/>
</dbReference>
<dbReference type="PROSITE" id="PS00113">
    <property type="entry name" value="ADENYLATE_KINASE"/>
    <property type="match status" value="1"/>
</dbReference>
<proteinExistence type="inferred from homology"/>
<feature type="chain" id="PRO_0000158859" description="Adenylate kinase">
    <location>
        <begin position="1"/>
        <end position="212"/>
    </location>
</feature>
<feature type="region of interest" description="NMP" evidence="1">
    <location>
        <begin position="30"/>
        <end position="59"/>
    </location>
</feature>
<feature type="region of interest" description="LID" evidence="1">
    <location>
        <begin position="127"/>
        <end position="159"/>
    </location>
</feature>
<feature type="binding site" evidence="1">
    <location>
        <begin position="10"/>
        <end position="15"/>
    </location>
    <ligand>
        <name>ATP</name>
        <dbReference type="ChEBI" id="CHEBI:30616"/>
    </ligand>
</feature>
<feature type="binding site" evidence="1">
    <location>
        <position position="31"/>
    </location>
    <ligand>
        <name>AMP</name>
        <dbReference type="ChEBI" id="CHEBI:456215"/>
    </ligand>
</feature>
<feature type="binding site" evidence="1">
    <location>
        <position position="36"/>
    </location>
    <ligand>
        <name>AMP</name>
        <dbReference type="ChEBI" id="CHEBI:456215"/>
    </ligand>
</feature>
<feature type="binding site" evidence="1">
    <location>
        <begin position="57"/>
        <end position="59"/>
    </location>
    <ligand>
        <name>AMP</name>
        <dbReference type="ChEBI" id="CHEBI:456215"/>
    </ligand>
</feature>
<feature type="binding site" evidence="1">
    <location>
        <begin position="86"/>
        <end position="89"/>
    </location>
    <ligand>
        <name>AMP</name>
        <dbReference type="ChEBI" id="CHEBI:456215"/>
    </ligand>
</feature>
<feature type="binding site" evidence="1">
    <location>
        <position position="93"/>
    </location>
    <ligand>
        <name>AMP</name>
        <dbReference type="ChEBI" id="CHEBI:456215"/>
    </ligand>
</feature>
<feature type="binding site" evidence="1">
    <location>
        <position position="128"/>
    </location>
    <ligand>
        <name>ATP</name>
        <dbReference type="ChEBI" id="CHEBI:30616"/>
    </ligand>
</feature>
<feature type="binding site" evidence="1">
    <location>
        <begin position="137"/>
        <end position="138"/>
    </location>
    <ligand>
        <name>ATP</name>
        <dbReference type="ChEBI" id="CHEBI:30616"/>
    </ligand>
</feature>
<feature type="binding site" evidence="1">
    <location>
        <position position="156"/>
    </location>
    <ligand>
        <name>AMP</name>
        <dbReference type="ChEBI" id="CHEBI:456215"/>
    </ligand>
</feature>
<feature type="binding site" evidence="1">
    <location>
        <position position="167"/>
    </location>
    <ligand>
        <name>AMP</name>
        <dbReference type="ChEBI" id="CHEBI:456215"/>
    </ligand>
</feature>
<feature type="binding site" evidence="1">
    <location>
        <position position="195"/>
    </location>
    <ligand>
        <name>ATP</name>
        <dbReference type="ChEBI" id="CHEBI:30616"/>
    </ligand>
</feature>
<name>KAD_STRMU</name>
<keyword id="KW-0067">ATP-binding</keyword>
<keyword id="KW-0963">Cytoplasm</keyword>
<keyword id="KW-0418">Kinase</keyword>
<keyword id="KW-0545">Nucleotide biosynthesis</keyword>
<keyword id="KW-0547">Nucleotide-binding</keyword>
<keyword id="KW-1185">Reference proteome</keyword>
<keyword id="KW-0808">Transferase</keyword>
<comment type="function">
    <text evidence="1">Catalyzes the reversible transfer of the terminal phosphate group between ATP and AMP. Plays an important role in cellular energy homeostasis and in adenine nucleotide metabolism.</text>
</comment>
<comment type="catalytic activity">
    <reaction evidence="1">
        <text>AMP + ATP = 2 ADP</text>
        <dbReference type="Rhea" id="RHEA:12973"/>
        <dbReference type="ChEBI" id="CHEBI:30616"/>
        <dbReference type="ChEBI" id="CHEBI:456215"/>
        <dbReference type="ChEBI" id="CHEBI:456216"/>
        <dbReference type="EC" id="2.7.4.3"/>
    </reaction>
</comment>
<comment type="pathway">
    <text evidence="1">Purine metabolism; AMP biosynthesis via salvage pathway; AMP from ADP: step 1/1.</text>
</comment>
<comment type="subunit">
    <text evidence="1">Monomer.</text>
</comment>
<comment type="subcellular location">
    <subcellularLocation>
        <location evidence="1">Cytoplasm</location>
    </subcellularLocation>
</comment>
<comment type="domain">
    <text evidence="1">Consists of three domains, a large central CORE domain and two small peripheral domains, NMPbind and LID, which undergo movements during catalysis. The LID domain closes over the site of phosphoryl transfer upon ATP binding. Assembling and dissambling the active center during each catalytic cycle provides an effective means to prevent ATP hydrolysis.</text>
</comment>
<comment type="similarity">
    <text evidence="1">Belongs to the adenylate kinase family.</text>
</comment>
<evidence type="ECO:0000255" key="1">
    <source>
        <dbReference type="HAMAP-Rule" id="MF_00235"/>
    </source>
</evidence>
<reference key="1">
    <citation type="journal article" date="2002" name="Proc. Natl. Acad. Sci. U.S.A.">
        <title>Genome sequence of Streptococcus mutans UA159, a cariogenic dental pathogen.</title>
        <authorList>
            <person name="Ajdic D.J."/>
            <person name="McShan W.M."/>
            <person name="McLaughlin R.E."/>
            <person name="Savic G."/>
            <person name="Chang J."/>
            <person name="Carson M.B."/>
            <person name="Primeaux C."/>
            <person name="Tian R."/>
            <person name="Kenton S."/>
            <person name="Jia H.G."/>
            <person name="Lin S.P."/>
            <person name="Qian Y."/>
            <person name="Li S."/>
            <person name="Zhu H."/>
            <person name="Najar F.Z."/>
            <person name="Lai H."/>
            <person name="White J."/>
            <person name="Roe B.A."/>
            <person name="Ferretti J.J."/>
        </authorList>
    </citation>
    <scope>NUCLEOTIDE SEQUENCE [LARGE SCALE GENOMIC DNA]</scope>
    <source>
        <strain>ATCC 700610 / UA159</strain>
    </source>
</reference>
<protein>
    <recommendedName>
        <fullName evidence="1">Adenylate kinase</fullName>
        <shortName evidence="1">AK</shortName>
        <ecNumber evidence="1">2.7.4.3</ecNumber>
    </recommendedName>
    <alternativeName>
        <fullName evidence="1">ATP-AMP transphosphorylase</fullName>
    </alternativeName>
    <alternativeName>
        <fullName evidence="1">ATP:AMP phosphotransferase</fullName>
    </alternativeName>
    <alternativeName>
        <fullName evidence="1">Adenylate monophosphate kinase</fullName>
    </alternativeName>
</protein>